<gene>
    <name type="primary">SLC1A1</name>
    <name type="synonym">EAAC1</name>
    <name type="synonym">EAAT3</name>
</gene>
<feature type="chain" id="PRO_0000202064" description="Excitatory amino acid transporter 3">
    <location>
        <begin position="1"/>
        <end position="524"/>
    </location>
</feature>
<feature type="topological domain" description="Cytoplasmic" evidence="5">
    <location>
        <begin position="1"/>
        <end position="18"/>
    </location>
</feature>
<feature type="transmembrane region" description="Helical" evidence="4">
    <location>
        <begin position="19"/>
        <end position="38"/>
    </location>
</feature>
<feature type="topological domain" description="Extracellular" evidence="5">
    <location>
        <begin position="39"/>
        <end position="61"/>
    </location>
</feature>
<feature type="transmembrane region" description="Helical" evidence="4">
    <location>
        <begin position="62"/>
        <end position="82"/>
    </location>
</feature>
<feature type="topological domain" description="Cytoplasmic" evidence="5">
    <location>
        <begin position="83"/>
        <end position="93"/>
    </location>
</feature>
<feature type="transmembrane region" description="Helical" evidence="4">
    <location>
        <begin position="94"/>
        <end position="114"/>
    </location>
</feature>
<feature type="topological domain" description="Extracellular" evidence="5">
    <location>
        <begin position="115"/>
        <end position="205"/>
    </location>
</feature>
<feature type="transmembrane region" description="Helical; Name=4" evidence="1">
    <location>
        <begin position="206"/>
        <end position="229"/>
    </location>
</feature>
<feature type="topological domain" description="Cytoplasmic" evidence="5">
    <location>
        <begin position="230"/>
        <end position="238"/>
    </location>
</feature>
<feature type="transmembrane region" description="Helical; Name=5" evidence="1">
    <location>
        <begin position="239"/>
        <end position="266"/>
    </location>
</feature>
<feature type="topological domain" description="Extracellular" evidence="5">
    <location>
        <begin position="267"/>
        <end position="286"/>
    </location>
</feature>
<feature type="transmembrane region" description="Helical; Name=6" evidence="1">
    <location>
        <begin position="287"/>
        <end position="308"/>
    </location>
</feature>
<feature type="topological domain" description="Cytoplasmic" evidence="5">
    <location>
        <begin position="309"/>
        <end position="313"/>
    </location>
</feature>
<feature type="intramembrane region" description="Discontinuously helical" evidence="1">
    <location>
        <begin position="314"/>
        <end position="344"/>
    </location>
</feature>
<feature type="topological domain" description="Cytoplasmic" evidence="5">
    <location>
        <begin position="345"/>
        <end position="353"/>
    </location>
</feature>
<feature type="transmembrane region" description="Helical; Name=7" evidence="1">
    <location>
        <begin position="354"/>
        <end position="380"/>
    </location>
</feature>
<feature type="topological domain" description="Extracellular" evidence="5">
    <location>
        <begin position="381"/>
        <end position="393"/>
    </location>
</feature>
<feature type="intramembrane region" description="Discontinuously helical" evidence="1">
    <location>
        <begin position="394"/>
        <end position="427"/>
    </location>
</feature>
<feature type="topological domain" description="Extracellular" evidence="5">
    <location>
        <begin position="428"/>
        <end position="440"/>
    </location>
</feature>
<feature type="transmembrane region" description="Helical; Name=8" evidence="1">
    <location>
        <begin position="441"/>
        <end position="462"/>
    </location>
</feature>
<feature type="topological domain" description="Cytoplasmic" evidence="5">
    <location>
        <begin position="463"/>
        <end position="524"/>
    </location>
</feature>
<feature type="binding site" evidence="2">
    <location>
        <position position="98"/>
    </location>
    <ligand>
        <name>Na(+)</name>
        <dbReference type="ChEBI" id="CHEBI:29101"/>
        <label>1</label>
    </ligand>
</feature>
<feature type="binding site" evidence="2">
    <location>
        <position position="101"/>
    </location>
    <ligand>
        <name>Na(+)</name>
        <dbReference type="ChEBI" id="CHEBI:29101"/>
        <label>1</label>
    </ligand>
</feature>
<feature type="binding site" evidence="2">
    <location>
        <position position="102"/>
    </location>
    <ligand>
        <name>Na(+)</name>
        <dbReference type="ChEBI" id="CHEBI:29101"/>
        <label>1</label>
    </ligand>
</feature>
<feature type="binding site" evidence="2">
    <location>
        <position position="331"/>
    </location>
    <ligand>
        <name>L-aspartate</name>
        <dbReference type="ChEBI" id="CHEBI:29991"/>
    </ligand>
</feature>
<feature type="binding site" evidence="2">
    <location>
        <position position="333"/>
    </location>
    <ligand>
        <name>L-aspartate</name>
        <dbReference type="ChEBI" id="CHEBI:29991"/>
    </ligand>
</feature>
<feature type="binding site" evidence="2">
    <location>
        <position position="362"/>
    </location>
    <ligand>
        <name>Na(+)</name>
        <dbReference type="ChEBI" id="CHEBI:29101"/>
        <label>1</label>
    </ligand>
</feature>
<feature type="binding site" evidence="2">
    <location>
        <position position="364"/>
    </location>
    <ligand>
        <name>Na(+)</name>
        <dbReference type="ChEBI" id="CHEBI:29101"/>
        <label>2</label>
    </ligand>
</feature>
<feature type="binding site" evidence="2">
    <location>
        <position position="366"/>
    </location>
    <ligand>
        <name>Na(+)</name>
        <dbReference type="ChEBI" id="CHEBI:29101"/>
        <label>1</label>
    </ligand>
</feature>
<feature type="binding site" evidence="2">
    <location>
        <position position="368"/>
    </location>
    <ligand>
        <name>Na(+)</name>
        <dbReference type="ChEBI" id="CHEBI:29101"/>
        <label>1</label>
    </ligand>
</feature>
<feature type="binding site" evidence="2">
    <location>
        <position position="370"/>
    </location>
    <ligand>
        <name>L-aspartate</name>
        <dbReference type="ChEBI" id="CHEBI:29991"/>
    </ligand>
</feature>
<feature type="binding site" evidence="2">
    <location>
        <position position="405"/>
    </location>
    <ligand>
        <name>Na(+)</name>
        <dbReference type="ChEBI" id="CHEBI:29101"/>
        <label>2</label>
    </ligand>
</feature>
<feature type="binding site" evidence="2">
    <location>
        <position position="406"/>
    </location>
    <ligand>
        <name>Na(+)</name>
        <dbReference type="ChEBI" id="CHEBI:29101"/>
        <label>2</label>
    </ligand>
</feature>
<feature type="binding site" evidence="2">
    <location>
        <position position="408"/>
    </location>
    <ligand>
        <name>Na(+)</name>
        <dbReference type="ChEBI" id="CHEBI:29101"/>
        <label>2</label>
    </ligand>
</feature>
<feature type="binding site" evidence="2">
    <location>
        <position position="411"/>
    </location>
    <ligand>
        <name>L-aspartate</name>
        <dbReference type="ChEBI" id="CHEBI:29991"/>
    </ligand>
</feature>
<feature type="binding site" evidence="2">
    <location>
        <position position="447"/>
    </location>
    <ligand>
        <name>L-aspartate</name>
        <dbReference type="ChEBI" id="CHEBI:29991"/>
    </ligand>
</feature>
<feature type="binding site" evidence="2">
    <location>
        <position position="448"/>
    </location>
    <ligand>
        <name>L-aspartate</name>
        <dbReference type="ChEBI" id="CHEBI:29991"/>
    </ligand>
</feature>
<feature type="binding site" evidence="2">
    <location>
        <position position="451"/>
    </location>
    <ligand>
        <name>L-aspartate</name>
        <dbReference type="ChEBI" id="CHEBI:29991"/>
    </ligand>
</feature>
<feature type="binding site" evidence="2">
    <location>
        <position position="451"/>
    </location>
    <ligand>
        <name>Na(+)</name>
        <dbReference type="ChEBI" id="CHEBI:29101"/>
        <label>1</label>
    </ligand>
</feature>
<feature type="binding site" evidence="2">
    <location>
        <position position="455"/>
    </location>
    <ligand>
        <name>Na(+)</name>
        <dbReference type="ChEBI" id="CHEBI:29101"/>
        <label>1</label>
    </ligand>
</feature>
<feature type="modified residue" description="Phosphoserine" evidence="3">
    <location>
        <position position="517"/>
    </location>
</feature>
<feature type="modified residue" description="Phosphoserine" evidence="3">
    <location>
        <position position="522"/>
    </location>
</feature>
<feature type="glycosylation site" description="N-linked (GlcNAc...) asparagine" evidence="4">
    <location>
        <position position="178"/>
    </location>
</feature>
<feature type="glycosylation site" description="N-linked (GlcNAc...) asparagine" evidence="4">
    <location>
        <position position="195"/>
    </location>
</feature>
<reference key="1">
    <citation type="journal article" date="1996" name="J. Biol. Chem.">
        <title>Induction of high affinity glutamate transport activity by amino acid deprivation in renal epithelial cells does not involve an increase in the amount of transporter protein.</title>
        <authorList>
            <person name="Nicholson B."/>
            <person name="McGivan J.D."/>
        </authorList>
    </citation>
    <scope>NUCLEOTIDE SEQUENCE [MRNA]</scope>
</reference>
<evidence type="ECO:0000250" key="1">
    <source>
        <dbReference type="UniProtKB" id="P43003"/>
    </source>
</evidence>
<evidence type="ECO:0000250" key="2">
    <source>
        <dbReference type="UniProtKB" id="P43005"/>
    </source>
</evidence>
<evidence type="ECO:0000250" key="3">
    <source>
        <dbReference type="UniProtKB" id="P51906"/>
    </source>
</evidence>
<evidence type="ECO:0000255" key="4"/>
<evidence type="ECO:0000305" key="5"/>
<protein>
    <recommendedName>
        <fullName>Excitatory amino acid transporter 3</fullName>
    </recommendedName>
    <alternativeName>
        <fullName>Excitatory amino-acid carrier 1</fullName>
    </alternativeName>
    <alternativeName>
        <fullName>Renal high affinity glutamate transporter EAAC1</fullName>
    </alternativeName>
    <alternativeName>
        <fullName>Sodium-dependent glutamate/aspartate transporter 3</fullName>
    </alternativeName>
    <alternativeName>
        <fullName>Solute carrier family 1 member 1</fullName>
    </alternativeName>
</protein>
<proteinExistence type="evidence at transcript level"/>
<accession>Q95135</accession>
<name>EAA3_BOVIN</name>
<dbReference type="EMBL" id="U72534">
    <property type="protein sequence ID" value="AAB16815.1"/>
    <property type="molecule type" value="mRNA"/>
</dbReference>
<dbReference type="PIR" id="S39017">
    <property type="entry name" value="S39017"/>
</dbReference>
<dbReference type="RefSeq" id="NP_777024.1">
    <property type="nucleotide sequence ID" value="NM_174599.2"/>
</dbReference>
<dbReference type="SMR" id="Q95135"/>
<dbReference type="FunCoup" id="Q95135">
    <property type="interactions" value="533"/>
</dbReference>
<dbReference type="STRING" id="9913.ENSBTAP00000025456"/>
<dbReference type="GlyCosmos" id="Q95135">
    <property type="glycosylation" value="2 sites, No reported glycans"/>
</dbReference>
<dbReference type="GlyGen" id="Q95135">
    <property type="glycosylation" value="2 sites"/>
</dbReference>
<dbReference type="PaxDb" id="9913-ENSBTAP00000025456"/>
<dbReference type="GeneID" id="282353"/>
<dbReference type="KEGG" id="bta:282353"/>
<dbReference type="CTD" id="6505"/>
<dbReference type="eggNOG" id="KOG3787">
    <property type="taxonomic scope" value="Eukaryota"/>
</dbReference>
<dbReference type="InParanoid" id="Q95135"/>
<dbReference type="OrthoDB" id="5877963at2759"/>
<dbReference type="Proteomes" id="UP000009136">
    <property type="component" value="Unplaced"/>
</dbReference>
<dbReference type="GO" id="GO:0016324">
    <property type="term" value="C:apical plasma membrane"/>
    <property type="evidence" value="ECO:0000250"/>
    <property type="project" value="UniProtKB"/>
</dbReference>
<dbReference type="GO" id="GO:0071944">
    <property type="term" value="C:cell periphery"/>
    <property type="evidence" value="ECO:0000314"/>
    <property type="project" value="ARUK-UCL"/>
</dbReference>
<dbReference type="GO" id="GO:0031901">
    <property type="term" value="C:early endosome membrane"/>
    <property type="evidence" value="ECO:0007669"/>
    <property type="project" value="UniProtKB-SubCell"/>
</dbReference>
<dbReference type="GO" id="GO:0031902">
    <property type="term" value="C:late endosome membrane"/>
    <property type="evidence" value="ECO:0007669"/>
    <property type="project" value="UniProtKB-SubCell"/>
</dbReference>
<dbReference type="GO" id="GO:0043005">
    <property type="term" value="C:neuron projection"/>
    <property type="evidence" value="ECO:0007669"/>
    <property type="project" value="UniProtKB-KW"/>
</dbReference>
<dbReference type="GO" id="GO:0005886">
    <property type="term" value="C:plasma membrane"/>
    <property type="evidence" value="ECO:0000250"/>
    <property type="project" value="UniProtKB"/>
</dbReference>
<dbReference type="GO" id="GO:0055038">
    <property type="term" value="C:recycling endosome membrane"/>
    <property type="evidence" value="ECO:0007669"/>
    <property type="project" value="UniProtKB-SubCell"/>
</dbReference>
<dbReference type="GO" id="GO:0045202">
    <property type="term" value="C:synapse"/>
    <property type="evidence" value="ECO:0007669"/>
    <property type="project" value="UniProtKB-SubCell"/>
</dbReference>
<dbReference type="GO" id="GO:0015108">
    <property type="term" value="F:chloride transmembrane transporter activity"/>
    <property type="evidence" value="ECO:0000250"/>
    <property type="project" value="UniProtKB"/>
</dbReference>
<dbReference type="GO" id="GO:0033229">
    <property type="term" value="F:cysteine transmembrane transporter activity"/>
    <property type="evidence" value="ECO:0000250"/>
    <property type="project" value="UniProtKB"/>
</dbReference>
<dbReference type="GO" id="GO:0015501">
    <property type="term" value="F:glutamate:sodium symporter activity"/>
    <property type="evidence" value="ECO:0000250"/>
    <property type="project" value="UniProtKB"/>
</dbReference>
<dbReference type="GO" id="GO:0005314">
    <property type="term" value="F:high-affinity L-glutamate transmembrane transporter activity"/>
    <property type="evidence" value="ECO:0000250"/>
    <property type="project" value="UniProtKB"/>
</dbReference>
<dbReference type="GO" id="GO:0005313">
    <property type="term" value="F:L-glutamate transmembrane transporter activity"/>
    <property type="evidence" value="ECO:0000250"/>
    <property type="project" value="UniProtKB"/>
</dbReference>
<dbReference type="GO" id="GO:0046872">
    <property type="term" value="F:metal ion binding"/>
    <property type="evidence" value="ECO:0007669"/>
    <property type="project" value="UniProtKB-KW"/>
</dbReference>
<dbReference type="GO" id="GO:1902476">
    <property type="term" value="P:chloride transmembrane transport"/>
    <property type="evidence" value="ECO:0000250"/>
    <property type="project" value="UniProtKB"/>
</dbReference>
<dbReference type="GO" id="GO:0042883">
    <property type="term" value="P:cysteine transport"/>
    <property type="evidence" value="ECO:0000250"/>
    <property type="project" value="UniProtKB"/>
</dbReference>
<dbReference type="GO" id="GO:0140009">
    <property type="term" value="P:L-aspartate import across plasma membrane"/>
    <property type="evidence" value="ECO:0000250"/>
    <property type="project" value="UniProtKB"/>
</dbReference>
<dbReference type="GO" id="GO:0070778">
    <property type="term" value="P:L-aspartate transmembrane transport"/>
    <property type="evidence" value="ECO:0000316"/>
    <property type="project" value="ARUK-UCL"/>
</dbReference>
<dbReference type="GO" id="GO:0098712">
    <property type="term" value="P:L-glutamate import across plasma membrane"/>
    <property type="evidence" value="ECO:0000250"/>
    <property type="project" value="UniProtKB"/>
</dbReference>
<dbReference type="GO" id="GO:0015813">
    <property type="term" value="P:L-glutamate transmembrane transport"/>
    <property type="evidence" value="ECO:0000316"/>
    <property type="project" value="ARUK-UCL"/>
</dbReference>
<dbReference type="GO" id="GO:0070633">
    <property type="term" value="P:transepithelial transport"/>
    <property type="evidence" value="ECO:0000316"/>
    <property type="project" value="ARUK-UCL"/>
</dbReference>
<dbReference type="GO" id="GO:0150104">
    <property type="term" value="P:transport across blood-brain barrier"/>
    <property type="evidence" value="ECO:0000316"/>
    <property type="project" value="ARUK-UCL"/>
</dbReference>
<dbReference type="FunFam" id="1.10.3860.10:FF:000002">
    <property type="entry name" value="Amino acid transporter"/>
    <property type="match status" value="1"/>
</dbReference>
<dbReference type="Gene3D" id="1.10.3860.10">
    <property type="entry name" value="Sodium:dicarboxylate symporter"/>
    <property type="match status" value="1"/>
</dbReference>
<dbReference type="InterPro" id="IPR050746">
    <property type="entry name" value="DAACS"/>
</dbReference>
<dbReference type="InterPro" id="IPR001991">
    <property type="entry name" value="Na-dicarboxylate_symporter"/>
</dbReference>
<dbReference type="InterPro" id="IPR018107">
    <property type="entry name" value="Na-dicarboxylate_symporter_CS"/>
</dbReference>
<dbReference type="InterPro" id="IPR036458">
    <property type="entry name" value="Na:dicarbo_symporter_sf"/>
</dbReference>
<dbReference type="PANTHER" id="PTHR11958:SF109">
    <property type="entry name" value="EXCITATORY AMINO ACID TRANSPORTER 3"/>
    <property type="match status" value="1"/>
</dbReference>
<dbReference type="PANTHER" id="PTHR11958">
    <property type="entry name" value="SODIUM/DICARBOXYLATE SYMPORTER-RELATED"/>
    <property type="match status" value="1"/>
</dbReference>
<dbReference type="Pfam" id="PF00375">
    <property type="entry name" value="SDF"/>
    <property type="match status" value="1"/>
</dbReference>
<dbReference type="PRINTS" id="PR00173">
    <property type="entry name" value="EDTRNSPORT"/>
</dbReference>
<dbReference type="SUPFAM" id="SSF118215">
    <property type="entry name" value="Proton glutamate symport protein"/>
    <property type="match status" value="1"/>
</dbReference>
<dbReference type="PROSITE" id="PS00713">
    <property type="entry name" value="NA_DICARBOXYL_SYMP_1"/>
    <property type="match status" value="1"/>
</dbReference>
<dbReference type="PROSITE" id="PS00714">
    <property type="entry name" value="NA_DICARBOXYL_SYMP_2"/>
    <property type="match status" value="1"/>
</dbReference>
<keyword id="KW-0029">Amino-acid transport</keyword>
<keyword id="KW-1003">Cell membrane</keyword>
<keyword id="KW-0868">Chloride</keyword>
<keyword id="KW-0967">Endosome</keyword>
<keyword id="KW-0325">Glycoprotein</keyword>
<keyword id="KW-0472">Membrane</keyword>
<keyword id="KW-0479">Metal-binding</keyword>
<keyword id="KW-0597">Phosphoprotein</keyword>
<keyword id="KW-0630">Potassium</keyword>
<keyword id="KW-1185">Reference proteome</keyword>
<keyword id="KW-0915">Sodium</keyword>
<keyword id="KW-0769">Symport</keyword>
<keyword id="KW-0770">Synapse</keyword>
<keyword id="KW-0771">Synaptosome</keyword>
<keyword id="KW-0812">Transmembrane</keyword>
<keyword id="KW-1133">Transmembrane helix</keyword>
<keyword id="KW-0813">Transport</keyword>
<organism>
    <name type="scientific">Bos taurus</name>
    <name type="common">Bovine</name>
    <dbReference type="NCBI Taxonomy" id="9913"/>
    <lineage>
        <taxon>Eukaryota</taxon>
        <taxon>Metazoa</taxon>
        <taxon>Chordata</taxon>
        <taxon>Craniata</taxon>
        <taxon>Vertebrata</taxon>
        <taxon>Euteleostomi</taxon>
        <taxon>Mammalia</taxon>
        <taxon>Eutheria</taxon>
        <taxon>Laurasiatheria</taxon>
        <taxon>Artiodactyla</taxon>
        <taxon>Ruminantia</taxon>
        <taxon>Pecora</taxon>
        <taxon>Bovidae</taxon>
        <taxon>Bovinae</taxon>
        <taxon>Bos</taxon>
    </lineage>
</organism>
<sequence>MGKPARKGCDWKRFLRNNWLLLSTVVAVVLGIVIGVLVREYSKLSNLEKFYFSFPGEILMRMLKLVILPLIVSSMITGVATLDSNVSGKIGLRAVVYYFCTTLIAVILGIVLVVSIKPGVTQKVNEIDRTGNTPEVSTVDAMLDLIRNMFPENLVQACFQQYKTTREEVELSEEPGTNSTEATVTAIMTTAISKNKTKEYKVVGMYSDGINVLGLIVFCLVLGIVIGRKWEKGQILVDFFNALSDATMKIVQIIMCYMPIGILFLIAGKIIEVEDWEIFRKLGLYMATVLSGLAIHSIVILPLIYFIIVRKNPFQFAMGMAQALLTALMISSSSATLPVTFRCAEEKNRVDKRITRFVLPVGATINMDGTALYEAVAAVFIAQLNDLDLSVGQIITISVTATAASIGAAGVPQPGLVTMVIVLSAVGLPAEDVTLIIAVDWLLDRFRTMVNVLGDAFGTGIVEKLSKKELEQMDVSSEVNIVNPFTLESTALDNEDSDTKKSYVNGGFAVDKSDTISFTQTSQF</sequence>
<comment type="function">
    <text evidence="2 3">Sodium-dependent, high-affinity amino acid transporter that mediates the uptake of L-glutamate and also L-aspartate and D-aspartate. Can also transport L-cysteine (By similarity). Functions as a symporter that transports one amino acid molecule together with two or three Na(+) ions and one proton, in parallel with the counter-transport of one K(+) ion. Mediates Cl(-) flux that is not coupled to amino acid transport; this avoids the accumulation of negative charges due to aspartate and Na(+) symport (By similarity). Plays an important role in L-glutamate and L-aspartate reabsorption in renal tubuli. Plays a redundant role in the rapid removal of released glutamate from the synaptic cleft, which is essential for terminating the postsynaptic action of glutamate (By similarity). Contributes to glutathione biosynthesis and protection against oxidative stress via its role in L-glutamate and L-cysteine transport. Negatively regulated by ARL6IP5 (By similarity).</text>
</comment>
<comment type="catalytic activity">
    <reaction evidence="2">
        <text>K(+)(in) + L-glutamate(out) + 3 Na(+)(out) + H(+)(out) = K(+)(out) + L-glutamate(in) + 3 Na(+)(in) + H(+)(in)</text>
        <dbReference type="Rhea" id="RHEA:70699"/>
        <dbReference type="ChEBI" id="CHEBI:15378"/>
        <dbReference type="ChEBI" id="CHEBI:29101"/>
        <dbReference type="ChEBI" id="CHEBI:29103"/>
        <dbReference type="ChEBI" id="CHEBI:29985"/>
    </reaction>
</comment>
<comment type="catalytic activity">
    <reaction evidence="2">
        <text>K(+)(in) + L-aspartate(out) + 3 Na(+)(out) + H(+)(out) = K(+)(out) + L-aspartate(in) + 3 Na(+)(in) + H(+)(in)</text>
        <dbReference type="Rhea" id="RHEA:70851"/>
        <dbReference type="ChEBI" id="CHEBI:15378"/>
        <dbReference type="ChEBI" id="CHEBI:29101"/>
        <dbReference type="ChEBI" id="CHEBI:29103"/>
        <dbReference type="ChEBI" id="CHEBI:29991"/>
    </reaction>
</comment>
<comment type="catalytic activity">
    <reaction evidence="2">
        <text>D-aspartate(out) + K(+)(in) + 3 Na(+)(out) + H(+)(out) = D-aspartate(in) + K(+)(out) + 3 Na(+)(in) + H(+)(in)</text>
        <dbReference type="Rhea" id="RHEA:71379"/>
        <dbReference type="ChEBI" id="CHEBI:15378"/>
        <dbReference type="ChEBI" id="CHEBI:29101"/>
        <dbReference type="ChEBI" id="CHEBI:29103"/>
        <dbReference type="ChEBI" id="CHEBI:29990"/>
    </reaction>
</comment>
<comment type="catalytic activity">
    <reaction evidence="2">
        <text>K(+)(in) + L-cysteine(out) + 3 Na(+)(out) + H(+)(out) = K(+)(out) + L-cysteine(in) + 3 Na(+)(in) + H(+)(in)</text>
        <dbReference type="Rhea" id="RHEA:82559"/>
        <dbReference type="ChEBI" id="CHEBI:15378"/>
        <dbReference type="ChEBI" id="CHEBI:29101"/>
        <dbReference type="ChEBI" id="CHEBI:29103"/>
        <dbReference type="ChEBI" id="CHEBI:35235"/>
    </reaction>
</comment>
<comment type="subunit">
    <text evidence="3">Homotrimer. Interacts with ARL6IP5. Interacts with RTN2 (via N-terminus); the interaction promotes cell surface expression of SLC1A1. Interacts with SORCS2; this interaction is important for normal expression at the cell membrane.</text>
</comment>
<comment type="subcellular location">
    <subcellularLocation>
        <location evidence="3">Cell membrane</location>
        <topology evidence="1">Multi-pass membrane protein</topology>
    </subcellularLocation>
    <subcellularLocation>
        <location evidence="2">Apical cell membrane</location>
        <topology evidence="1">Multi-pass membrane protein</topology>
    </subcellularLocation>
    <subcellularLocation>
        <location evidence="3">Synapse</location>
        <location evidence="3">Synaptosome</location>
    </subcellularLocation>
    <subcellularLocation>
        <location evidence="3">Early endosome membrane</location>
    </subcellularLocation>
    <subcellularLocation>
        <location evidence="3">Late endosome membrane</location>
    </subcellularLocation>
    <subcellularLocation>
        <location evidence="3">Recycling endosome membrane</location>
    </subcellularLocation>
</comment>
<comment type="domain">
    <text evidence="1">Contains eight transmembrane regions plus two helical hairpins that dip into the membrane. These helical hairpin structures play an important role in the transport process. The first enters the membrane from the cytoplasmic side, the second one from the extracellular side. During the transport cycle, the regions involved in amino acid transport, and especially the helical hairpins, move vertically by about 15-18 Angstroms, alternating between exposure to the aqueous phase and reinsertion in the lipid bilayer. In contrast, the regions involved in trimerization do not move.</text>
</comment>
<comment type="similarity">
    <text evidence="5">Belongs to the dicarboxylate/amino acid:cation symporter (DAACS) (TC 2.A.23) family. SLC1A1 subfamily.</text>
</comment>